<dbReference type="EC" id="2.3.1.274" evidence="1"/>
<dbReference type="EMBL" id="M96793">
    <property type="protein sequence ID" value="AAB59064.1"/>
    <property type="status" value="ALT_INIT"/>
    <property type="molecule type" value="Genomic_DNA"/>
</dbReference>
<dbReference type="EMBL" id="U00096">
    <property type="protein sequence ID" value="AAC74174.2"/>
    <property type="molecule type" value="Genomic_DNA"/>
</dbReference>
<dbReference type="EMBL" id="AP009048">
    <property type="protein sequence ID" value="BAA35898.2"/>
    <property type="molecule type" value="Genomic_DNA"/>
</dbReference>
<dbReference type="PIR" id="G64852">
    <property type="entry name" value="G64852"/>
</dbReference>
<dbReference type="RefSeq" id="NP_415608.2">
    <property type="nucleotide sequence ID" value="NC_000913.3"/>
</dbReference>
<dbReference type="RefSeq" id="WP_000197597.1">
    <property type="nucleotide sequence ID" value="NZ_LN832404.1"/>
</dbReference>
<dbReference type="SMR" id="P27247"/>
<dbReference type="BioGRID" id="4261030">
    <property type="interactions" value="152"/>
</dbReference>
<dbReference type="DIP" id="DIP-10517N"/>
<dbReference type="FunCoup" id="P27247">
    <property type="interactions" value="458"/>
</dbReference>
<dbReference type="IntAct" id="P27247">
    <property type="interactions" value="1"/>
</dbReference>
<dbReference type="STRING" id="511145.b1090"/>
<dbReference type="jPOST" id="P27247"/>
<dbReference type="PaxDb" id="511145-b1090"/>
<dbReference type="EnsemblBacteria" id="AAC74174">
    <property type="protein sequence ID" value="AAC74174"/>
    <property type="gene ID" value="b1090"/>
</dbReference>
<dbReference type="GeneID" id="946165"/>
<dbReference type="KEGG" id="ecj:JW5156"/>
<dbReference type="KEGG" id="eco:b1090"/>
<dbReference type="PATRIC" id="fig|511145.12.peg.1133"/>
<dbReference type="EchoBASE" id="EB1407"/>
<dbReference type="eggNOG" id="COG0416">
    <property type="taxonomic scope" value="Bacteria"/>
</dbReference>
<dbReference type="HOGENOM" id="CLU_039379_1_0_6"/>
<dbReference type="InParanoid" id="P27247"/>
<dbReference type="OMA" id="HGKSNAR"/>
<dbReference type="OrthoDB" id="9806408at2"/>
<dbReference type="PhylomeDB" id="P27247"/>
<dbReference type="BioCyc" id="EcoCyc:EG11437-MONOMER"/>
<dbReference type="UniPathway" id="UPA00085"/>
<dbReference type="PRO" id="PR:P27247"/>
<dbReference type="Proteomes" id="UP000000625">
    <property type="component" value="Chromosome"/>
</dbReference>
<dbReference type="GO" id="GO:0005737">
    <property type="term" value="C:cytoplasm"/>
    <property type="evidence" value="ECO:0007669"/>
    <property type="project" value="UniProtKB-SubCell"/>
</dbReference>
<dbReference type="GO" id="GO:0043811">
    <property type="term" value="F:phosphate:acyl-[acyl carrier protein] acyltransferase activity"/>
    <property type="evidence" value="ECO:0000315"/>
    <property type="project" value="EcoCyc"/>
</dbReference>
<dbReference type="GO" id="GO:0006633">
    <property type="term" value="P:fatty acid biosynthetic process"/>
    <property type="evidence" value="ECO:0007669"/>
    <property type="project" value="UniProtKB-UniRule"/>
</dbReference>
<dbReference type="GO" id="GO:0008654">
    <property type="term" value="P:phospholipid biosynthetic process"/>
    <property type="evidence" value="ECO:0000316"/>
    <property type="project" value="EcoCyc"/>
</dbReference>
<dbReference type="FunFam" id="3.40.718.10:FF:000008">
    <property type="entry name" value="Phosphate acyltransferase"/>
    <property type="match status" value="1"/>
</dbReference>
<dbReference type="Gene3D" id="3.40.718.10">
    <property type="entry name" value="Isopropylmalate Dehydrogenase"/>
    <property type="match status" value="1"/>
</dbReference>
<dbReference type="HAMAP" id="MF_00019">
    <property type="entry name" value="PlsX"/>
    <property type="match status" value="1"/>
</dbReference>
<dbReference type="InterPro" id="IPR003664">
    <property type="entry name" value="FA_synthesis"/>
</dbReference>
<dbReference type="InterPro" id="IPR012281">
    <property type="entry name" value="Phospholipid_synth_PlsX-like"/>
</dbReference>
<dbReference type="NCBIfam" id="TIGR00182">
    <property type="entry name" value="plsX"/>
    <property type="match status" value="1"/>
</dbReference>
<dbReference type="PANTHER" id="PTHR30100">
    <property type="entry name" value="FATTY ACID/PHOSPHOLIPID SYNTHESIS PROTEIN PLSX"/>
    <property type="match status" value="1"/>
</dbReference>
<dbReference type="PANTHER" id="PTHR30100:SF1">
    <property type="entry name" value="PHOSPHATE ACYLTRANSFERASE"/>
    <property type="match status" value="1"/>
</dbReference>
<dbReference type="Pfam" id="PF02504">
    <property type="entry name" value="FA_synthesis"/>
    <property type="match status" value="1"/>
</dbReference>
<dbReference type="PIRSF" id="PIRSF002465">
    <property type="entry name" value="Phsphlp_syn_PlsX"/>
    <property type="match status" value="1"/>
</dbReference>
<dbReference type="SUPFAM" id="SSF53659">
    <property type="entry name" value="Isocitrate/Isopropylmalate dehydrogenase-like"/>
    <property type="match status" value="1"/>
</dbReference>
<organism>
    <name type="scientific">Escherichia coli (strain K12)</name>
    <dbReference type="NCBI Taxonomy" id="83333"/>
    <lineage>
        <taxon>Bacteria</taxon>
        <taxon>Pseudomonadati</taxon>
        <taxon>Pseudomonadota</taxon>
        <taxon>Gammaproteobacteria</taxon>
        <taxon>Enterobacterales</taxon>
        <taxon>Enterobacteriaceae</taxon>
        <taxon>Escherichia</taxon>
    </lineage>
</organism>
<name>PLSX_ECOLI</name>
<sequence>MTRLTLALDVMGGDFGPSVTVPAALQALNSNSQLTLLLVGNSDAITPLLAKADFEQRSRLQIIPAQSVIASDARPSQAIRASRGSSMRVALELVKEGRAQACVSAGNTGALMGLAKLLLKPLEGIERPALVTVLPHQQKGKTVVLDLGANVDCDSTMLVQFAIMGSVLAEEVVEIPNPRVALLNIGEEEVKGLDSIRDASAVLKTIPSINYIGYLEANELLTGKTDVLVCDGFTGNVTLKTMEGVVRMFLSLLKSQGEGKKRSWWLLLLKRWLQKSLTRRFSHLNPDQYNGACLLGLRGTVIKSHGAANQRAFAVAIEQAVQAVQRQVPQRIAARLESVYPAGFELLDGGKSGTLR</sequence>
<proteinExistence type="evidence at protein level"/>
<keyword id="KW-0963">Cytoplasm</keyword>
<keyword id="KW-0444">Lipid biosynthesis</keyword>
<keyword id="KW-0443">Lipid metabolism</keyword>
<keyword id="KW-0594">Phospholipid biosynthesis</keyword>
<keyword id="KW-1208">Phospholipid metabolism</keyword>
<keyword id="KW-1185">Reference proteome</keyword>
<keyword id="KW-0808">Transferase</keyword>
<gene>
    <name evidence="1" type="primary">plsX</name>
    <name type="ordered locus">b1090</name>
    <name type="ordered locus">JW5156</name>
</gene>
<comment type="function">
    <text evidence="1 2">Catalyzes the reversible formation of acyl-phosphate (acyl-PO(4)) from acyl-[acyl-carrier-protein] (acyl-ACP). This enzyme utilizes acyl-ACP as fatty acyl donor, but not acyl-CoA.</text>
</comment>
<comment type="catalytic activity">
    <reaction evidence="1">
        <text>a fatty acyl-[ACP] + phosphate = an acyl phosphate + holo-[ACP]</text>
        <dbReference type="Rhea" id="RHEA:42292"/>
        <dbReference type="Rhea" id="RHEA-COMP:9685"/>
        <dbReference type="Rhea" id="RHEA-COMP:14125"/>
        <dbReference type="ChEBI" id="CHEBI:43474"/>
        <dbReference type="ChEBI" id="CHEBI:59918"/>
        <dbReference type="ChEBI" id="CHEBI:64479"/>
        <dbReference type="ChEBI" id="CHEBI:138651"/>
        <dbReference type="EC" id="2.3.1.274"/>
    </reaction>
</comment>
<comment type="pathway">
    <text evidence="1">Lipid metabolism; phospholipid metabolism.</text>
</comment>
<comment type="subunit">
    <text evidence="1">Homodimer. Probably interacts with PlsY.</text>
</comment>
<comment type="subcellular location">
    <subcellularLocation>
        <location>Cytoplasm</location>
    </subcellularLocation>
    <text evidence="3">Associated with the membrane possibly through PlsY.</text>
</comment>
<comment type="similarity">
    <text evidence="1">Belongs to the PlsX family.</text>
</comment>
<comment type="sequence caution" evidence="3">
    <conflict type="erroneous initiation">
        <sequence resource="EMBL-CDS" id="AAB59064"/>
    </conflict>
    <text>Truncated N-terminus.</text>
</comment>
<reference key="1">
    <citation type="journal article" date="1992" name="J. Bacteriol.">
        <title>Physical locations of genes in the rne (ams)-rpmF-plsX-fab region of the Escherichia coli K-12 chromosome.</title>
        <authorList>
            <person name="Oh W."/>
            <person name="Larson T.J."/>
        </authorList>
    </citation>
    <scope>NUCLEOTIDE SEQUENCE [GENOMIC DNA]</scope>
    <source>
        <strain>K12</strain>
    </source>
</reference>
<reference key="2">
    <citation type="journal article" date="1997" name="Science">
        <title>The complete genome sequence of Escherichia coli K-12.</title>
        <authorList>
            <person name="Blattner F.R."/>
            <person name="Plunkett G. III"/>
            <person name="Bloch C.A."/>
            <person name="Perna N.T."/>
            <person name="Burland V."/>
            <person name="Riley M."/>
            <person name="Collado-Vides J."/>
            <person name="Glasner J.D."/>
            <person name="Rode C.K."/>
            <person name="Mayhew G.F."/>
            <person name="Gregor J."/>
            <person name="Davis N.W."/>
            <person name="Kirkpatrick H.A."/>
            <person name="Goeden M.A."/>
            <person name="Rose D.J."/>
            <person name="Mau B."/>
            <person name="Shao Y."/>
        </authorList>
    </citation>
    <scope>NUCLEOTIDE SEQUENCE [LARGE SCALE GENOMIC DNA]</scope>
    <source>
        <strain>K12 / MG1655 / ATCC 47076</strain>
    </source>
</reference>
<reference key="3">
    <citation type="journal article" date="2006" name="Mol. Syst. Biol.">
        <title>Highly accurate genome sequences of Escherichia coli K-12 strains MG1655 and W3110.</title>
        <authorList>
            <person name="Hayashi K."/>
            <person name="Morooka N."/>
            <person name="Yamamoto Y."/>
            <person name="Fujita K."/>
            <person name="Isono K."/>
            <person name="Choi S."/>
            <person name="Ohtsubo E."/>
            <person name="Baba T."/>
            <person name="Wanner B.L."/>
            <person name="Mori H."/>
            <person name="Horiuchi T."/>
        </authorList>
    </citation>
    <scope>NUCLEOTIDE SEQUENCE [LARGE SCALE GENOMIC DNA]</scope>
    <source>
        <strain>K12 / W3110 / ATCC 27325 / DSM 5911</strain>
    </source>
</reference>
<reference key="4">
    <citation type="journal article" date="1996" name="DNA Res.">
        <title>A 718-kb DNA sequence of the Escherichia coli K-12 genome corresponding to the 12.7-28.0 min region on the linkage map.</title>
        <authorList>
            <person name="Oshima T."/>
            <person name="Aiba H."/>
            <person name="Baba T."/>
            <person name="Fujita K."/>
            <person name="Hayashi K."/>
            <person name="Honjo A."/>
            <person name="Ikemoto K."/>
            <person name="Inada T."/>
            <person name="Itoh T."/>
            <person name="Kajihara M."/>
            <person name="Kanai K."/>
            <person name="Kashimoto K."/>
            <person name="Kimura S."/>
            <person name="Kitagawa M."/>
            <person name="Makino K."/>
            <person name="Masuda S."/>
            <person name="Miki T."/>
            <person name="Mizobuchi K."/>
            <person name="Mori H."/>
            <person name="Motomura K."/>
            <person name="Nakamura Y."/>
            <person name="Nashimoto H."/>
            <person name="Nishio Y."/>
            <person name="Saito N."/>
            <person name="Sampei G."/>
            <person name="Seki Y."/>
            <person name="Tagami H."/>
            <person name="Takemoto K."/>
            <person name="Wada C."/>
            <person name="Yamamoto Y."/>
            <person name="Yano M."/>
            <person name="Horiuchi T."/>
        </authorList>
    </citation>
    <scope>NUCLEOTIDE SEQUENCE [LARGE SCALE GENOMIC DNA] OF 1-30</scope>
    <source>
        <strain>K12 / W3110 / ATCC 27325 / DSM 5911</strain>
    </source>
</reference>
<reference key="5">
    <citation type="journal article" date="2007" name="BMC Microbiol.">
        <title>Involvement of the YneS/YgiH and PlsX proteins in phospholipid biosynthesis in both Bacillus subtilis and Escherichia coli.</title>
        <authorList>
            <person name="Yoshimura M."/>
            <person name="Oshima T."/>
            <person name="Ogasawara N."/>
        </authorList>
    </citation>
    <scope>FUNCTION IN PHOSPHOLIPID BIOSYNTHESIS</scope>
    <source>
        <strain>K12 / W3110 / ATCC 27325 / DSM 5911</strain>
    </source>
</reference>
<protein>
    <recommendedName>
        <fullName evidence="1">Phosphate acyltransferase</fullName>
        <ecNumber evidence="1">2.3.1.274</ecNumber>
    </recommendedName>
    <alternativeName>
        <fullName evidence="1">Acyl-ACP phosphotransacylase</fullName>
    </alternativeName>
    <alternativeName>
        <fullName evidence="1">Acyl-[acyl-carrier-protein]--phosphate acyltransferase</fullName>
    </alternativeName>
    <alternativeName>
        <fullName evidence="1">Phosphate-acyl-ACP acyltransferase</fullName>
    </alternativeName>
</protein>
<evidence type="ECO:0000255" key="1">
    <source>
        <dbReference type="HAMAP-Rule" id="MF_00019"/>
    </source>
</evidence>
<evidence type="ECO:0000269" key="2">
    <source>
    </source>
</evidence>
<evidence type="ECO:0000305" key="3"/>
<accession>P27247</accession>
<feature type="chain" id="PRO_0000189875" description="Phosphate acyltransferase">
    <location>
        <begin position="1"/>
        <end position="356"/>
    </location>
</feature>